<name>NU5C_LEMMI</name>
<sequence>MEHTYQYAWIIPLLPLPVTMSIGFGLLLIPTATKSIRRMWAFPSVLLLSIGLIFSANLAFQQINGSFIYQYLWSWTINNDFSLEFGYFIDPLTSVMLILITTVGIMVLIYSDNYMSHDQGYLRFFAYMSFFNASMLGLVTSSNLIQIYIFWELVGMCSYLLIGFWFTRPSAASACQKAFITNRVGDFGLLLGILGFYWITGSFEFRDLFETFNKLNNEGNSLFPTLCAFLLFLGAIAKSAQFPLHVWLPDAMEGPTPISALIHAATMVAAGIFLVARLLPLFTGIPYIMNIISLIGVITLLLGATLALAQRDIKRSLAYSTMSQLGYIMLALGLGSYRAALFHLITHAYSKALLFLGSGSIIHSMEPLVGYSPDKSQNMVLMGGLTRYIPITRTTFLLGTLSLCGIPPLACFWSKDEILSESWLYSPSFAVIAYFTAGLTAFYMFRVYLLTFEGSLHVNFQNYSGTQNTSAYSISLWGKEEPKSVNSLFSTMKTNNETKNILFFEKNIYQFNENVINQMRDFTTPFLRKNTSMYPHESDNTMLYPLLILVVFTLFVGFIGIPLVQGEGEIDLNLLSKWLAPSKNLLYPNSEDSIDLYDFFINASFSVSIATGGIFLAFIFYGSPYSPLQNLDLMNLLVKIGTKTKRVSLDKIANIVYNWSHNRGYIDIFYTNVVTQSIRELAKLTQFFDRYIIDGITNSVGVLSFFAGEAIKYLVGGGRISFYLFFYLFFILIFVYFLFLSL</sequence>
<geneLocation type="chloroplast"/>
<proteinExistence type="inferred from homology"/>
<protein>
    <recommendedName>
        <fullName>NAD(P)H-quinone oxidoreductase subunit 5, chloroplastic</fullName>
        <ecNumber>7.1.1.-</ecNumber>
    </recommendedName>
    <alternativeName>
        <fullName>NAD(P)H dehydrogenase subunit 5</fullName>
    </alternativeName>
    <alternativeName>
        <fullName>NADH-plastoquinone oxidoreductase subunit 5</fullName>
    </alternativeName>
</protein>
<organism>
    <name type="scientific">Lemna minor</name>
    <name type="common">Common duckweed</name>
    <dbReference type="NCBI Taxonomy" id="4472"/>
    <lineage>
        <taxon>Eukaryota</taxon>
        <taxon>Viridiplantae</taxon>
        <taxon>Streptophyta</taxon>
        <taxon>Embryophyta</taxon>
        <taxon>Tracheophyta</taxon>
        <taxon>Spermatophyta</taxon>
        <taxon>Magnoliopsida</taxon>
        <taxon>Liliopsida</taxon>
        <taxon>Araceae</taxon>
        <taxon>Lemnoideae</taxon>
        <taxon>Lemna</taxon>
    </lineage>
</organism>
<evidence type="ECO:0000250" key="1"/>
<evidence type="ECO:0000255" key="2"/>
<evidence type="ECO:0000305" key="3"/>
<gene>
    <name type="primary">ndhF</name>
</gene>
<accession>A9L9E4</accession>
<feature type="chain" id="PRO_0000360943" description="NAD(P)H-quinone oxidoreductase subunit 5, chloroplastic">
    <location>
        <begin position="1"/>
        <end position="742"/>
    </location>
</feature>
<feature type="transmembrane region" description="Helical" evidence="2">
    <location>
        <begin position="9"/>
        <end position="29"/>
    </location>
</feature>
<feature type="transmembrane region" description="Helical" evidence="2">
    <location>
        <begin position="40"/>
        <end position="60"/>
    </location>
</feature>
<feature type="transmembrane region" description="Helical" evidence="2">
    <location>
        <begin position="89"/>
        <end position="109"/>
    </location>
</feature>
<feature type="transmembrane region" description="Helical" evidence="2">
    <location>
        <begin position="125"/>
        <end position="145"/>
    </location>
</feature>
<feature type="transmembrane region" description="Helical" evidence="2">
    <location>
        <begin position="147"/>
        <end position="167"/>
    </location>
</feature>
<feature type="transmembrane region" description="Helical" evidence="2">
    <location>
        <begin position="185"/>
        <end position="205"/>
    </location>
</feature>
<feature type="transmembrane region" description="Helical" evidence="2">
    <location>
        <begin position="228"/>
        <end position="248"/>
    </location>
</feature>
<feature type="transmembrane region" description="Helical" evidence="2">
    <location>
        <begin position="256"/>
        <end position="276"/>
    </location>
</feature>
<feature type="transmembrane region" description="Helical" evidence="2">
    <location>
        <begin position="288"/>
        <end position="308"/>
    </location>
</feature>
<feature type="transmembrane region" description="Helical" evidence="2">
    <location>
        <begin position="325"/>
        <end position="345"/>
    </location>
</feature>
<feature type="transmembrane region" description="Helical" evidence="2">
    <location>
        <begin position="352"/>
        <end position="372"/>
    </location>
</feature>
<feature type="transmembrane region" description="Helical" evidence="2">
    <location>
        <begin position="394"/>
        <end position="414"/>
    </location>
</feature>
<feature type="transmembrane region" description="Helical" evidence="2">
    <location>
        <begin position="423"/>
        <end position="443"/>
    </location>
</feature>
<feature type="transmembrane region" description="Helical" evidence="2">
    <location>
        <begin position="544"/>
        <end position="564"/>
    </location>
</feature>
<feature type="transmembrane region" description="Helical" evidence="2">
    <location>
        <begin position="599"/>
        <end position="619"/>
    </location>
</feature>
<feature type="transmembrane region" description="Helical" evidence="2">
    <location>
        <begin position="720"/>
        <end position="740"/>
    </location>
</feature>
<keyword id="KW-0150">Chloroplast</keyword>
<keyword id="KW-0472">Membrane</keyword>
<keyword id="KW-0520">NAD</keyword>
<keyword id="KW-0521">NADP</keyword>
<keyword id="KW-0934">Plastid</keyword>
<keyword id="KW-0618">Plastoquinone</keyword>
<keyword id="KW-0874">Quinone</keyword>
<keyword id="KW-0793">Thylakoid</keyword>
<keyword id="KW-1278">Translocase</keyword>
<keyword id="KW-0812">Transmembrane</keyword>
<keyword id="KW-1133">Transmembrane helix</keyword>
<keyword id="KW-0813">Transport</keyword>
<comment type="function">
    <text evidence="1">NDH shuttles electrons from NAD(P)H:plastoquinone, via FMN and iron-sulfur (Fe-S) centers, to quinones in the photosynthetic chain and possibly in a chloroplast respiratory chain. The immediate electron acceptor for the enzyme in this species is believed to be plastoquinone. Couples the redox reaction to proton translocation, and thus conserves the redox energy in a proton gradient (By similarity).</text>
</comment>
<comment type="catalytic activity">
    <reaction>
        <text>a plastoquinone + NADH + (n+1) H(+)(in) = a plastoquinol + NAD(+) + n H(+)(out)</text>
        <dbReference type="Rhea" id="RHEA:42608"/>
        <dbReference type="Rhea" id="RHEA-COMP:9561"/>
        <dbReference type="Rhea" id="RHEA-COMP:9562"/>
        <dbReference type="ChEBI" id="CHEBI:15378"/>
        <dbReference type="ChEBI" id="CHEBI:17757"/>
        <dbReference type="ChEBI" id="CHEBI:57540"/>
        <dbReference type="ChEBI" id="CHEBI:57945"/>
        <dbReference type="ChEBI" id="CHEBI:62192"/>
    </reaction>
</comment>
<comment type="catalytic activity">
    <reaction>
        <text>a plastoquinone + NADPH + (n+1) H(+)(in) = a plastoquinol + NADP(+) + n H(+)(out)</text>
        <dbReference type="Rhea" id="RHEA:42612"/>
        <dbReference type="Rhea" id="RHEA-COMP:9561"/>
        <dbReference type="Rhea" id="RHEA-COMP:9562"/>
        <dbReference type="ChEBI" id="CHEBI:15378"/>
        <dbReference type="ChEBI" id="CHEBI:17757"/>
        <dbReference type="ChEBI" id="CHEBI:57783"/>
        <dbReference type="ChEBI" id="CHEBI:58349"/>
        <dbReference type="ChEBI" id="CHEBI:62192"/>
    </reaction>
</comment>
<comment type="subunit">
    <text evidence="1">NDH is composed of at least 16 different subunits, 5 of which are encoded in the nucleus.</text>
</comment>
<comment type="subcellular location">
    <subcellularLocation>
        <location evidence="1">Plastid</location>
        <location evidence="1">Chloroplast thylakoid membrane</location>
        <topology evidence="1">Multi-pass membrane protein</topology>
    </subcellularLocation>
</comment>
<comment type="similarity">
    <text evidence="3">Belongs to the complex I subunit 5 family.</text>
</comment>
<dbReference type="EC" id="7.1.1.-"/>
<dbReference type="EMBL" id="DQ400350">
    <property type="protein sequence ID" value="ABD48543.1"/>
    <property type="molecule type" value="Genomic_DNA"/>
</dbReference>
<dbReference type="RefSeq" id="YP_001595556.1">
    <property type="nucleotide sequence ID" value="NC_010109.1"/>
</dbReference>
<dbReference type="SMR" id="A9L9E4"/>
<dbReference type="GeneID" id="5787532"/>
<dbReference type="GO" id="GO:0009535">
    <property type="term" value="C:chloroplast thylakoid membrane"/>
    <property type="evidence" value="ECO:0007669"/>
    <property type="project" value="UniProtKB-SubCell"/>
</dbReference>
<dbReference type="GO" id="GO:0008137">
    <property type="term" value="F:NADH dehydrogenase (ubiquinone) activity"/>
    <property type="evidence" value="ECO:0007669"/>
    <property type="project" value="InterPro"/>
</dbReference>
<dbReference type="GO" id="GO:0048038">
    <property type="term" value="F:quinone binding"/>
    <property type="evidence" value="ECO:0007669"/>
    <property type="project" value="UniProtKB-KW"/>
</dbReference>
<dbReference type="GO" id="GO:0042773">
    <property type="term" value="P:ATP synthesis coupled electron transport"/>
    <property type="evidence" value="ECO:0007669"/>
    <property type="project" value="InterPro"/>
</dbReference>
<dbReference type="GO" id="GO:0015990">
    <property type="term" value="P:electron transport coupled proton transport"/>
    <property type="evidence" value="ECO:0007669"/>
    <property type="project" value="TreeGrafter"/>
</dbReference>
<dbReference type="Gene3D" id="1.20.5.2700">
    <property type="match status" value="1"/>
</dbReference>
<dbReference type="InterPro" id="IPR002128">
    <property type="entry name" value="NADH_UbQ_OxRdtase_chlpt_su5_C"/>
</dbReference>
<dbReference type="InterPro" id="IPR018393">
    <property type="entry name" value="NADHpl_OxRdtase_5_subgr"/>
</dbReference>
<dbReference type="InterPro" id="IPR001750">
    <property type="entry name" value="ND/Mrp_TM"/>
</dbReference>
<dbReference type="InterPro" id="IPR003945">
    <property type="entry name" value="NU5C-like"/>
</dbReference>
<dbReference type="InterPro" id="IPR001516">
    <property type="entry name" value="Proton_antipo_N"/>
</dbReference>
<dbReference type="NCBIfam" id="TIGR01974">
    <property type="entry name" value="NDH_I_L"/>
    <property type="match status" value="1"/>
</dbReference>
<dbReference type="NCBIfam" id="NF005141">
    <property type="entry name" value="PRK06590.1"/>
    <property type="match status" value="1"/>
</dbReference>
<dbReference type="PANTHER" id="PTHR42829">
    <property type="entry name" value="NADH-UBIQUINONE OXIDOREDUCTASE CHAIN 5"/>
    <property type="match status" value="1"/>
</dbReference>
<dbReference type="PANTHER" id="PTHR42829:SF2">
    <property type="entry name" value="NADH-UBIQUINONE OXIDOREDUCTASE CHAIN 5"/>
    <property type="match status" value="1"/>
</dbReference>
<dbReference type="Pfam" id="PF01010">
    <property type="entry name" value="Proton_antipo_C"/>
    <property type="match status" value="1"/>
</dbReference>
<dbReference type="Pfam" id="PF00361">
    <property type="entry name" value="Proton_antipo_M"/>
    <property type="match status" value="1"/>
</dbReference>
<dbReference type="Pfam" id="PF00662">
    <property type="entry name" value="Proton_antipo_N"/>
    <property type="match status" value="1"/>
</dbReference>
<dbReference type="PRINTS" id="PR01434">
    <property type="entry name" value="NADHDHGNASE5"/>
</dbReference>
<dbReference type="PRINTS" id="PR01435">
    <property type="entry name" value="NPOXDRDTASE5"/>
</dbReference>
<reference key="1">
    <citation type="journal article" date="2008" name="J. Mol. Evol.">
        <title>Complete sequence of the Duckweed (Lemna minor) chloroplast genome: structural organization and phylogenetic relationships to other angiosperms.</title>
        <authorList>
            <person name="Mardanov A.V."/>
            <person name="Ravin N.V."/>
            <person name="Kuznetsov B.B."/>
            <person name="Samigullin T.H."/>
            <person name="Antonov A.S."/>
            <person name="Kolganova T.V."/>
            <person name="Skyabin K.G."/>
        </authorList>
    </citation>
    <scope>NUCLEOTIDE SEQUENCE [LARGE SCALE GENOMIC DNA]</scope>
</reference>